<feature type="chain" id="PRO_0000429925" description="Chitinase 4">
    <location>
        <begin position="1"/>
        <end position="388"/>
    </location>
</feature>
<feature type="domain" description="GH18" evidence="2">
    <location>
        <begin position="22"/>
        <end position="375"/>
    </location>
</feature>
<feature type="active site" description="Proton donor" evidence="2">
    <location>
        <position position="151"/>
    </location>
</feature>
<feature type="binding site" evidence="2">
    <location>
        <begin position="82"/>
        <end position="83"/>
    </location>
    <ligand>
        <name>chitin</name>
        <dbReference type="ChEBI" id="CHEBI:17029"/>
    </ligand>
</feature>
<feature type="binding site" evidence="2">
    <location>
        <begin position="109"/>
        <end position="112"/>
    </location>
    <ligand>
        <name>chitin</name>
        <dbReference type="ChEBI" id="CHEBI:17029"/>
    </ligand>
</feature>
<feature type="binding site" evidence="2">
    <location>
        <position position="152"/>
    </location>
    <ligand>
        <name>chitin</name>
        <dbReference type="ChEBI" id="CHEBI:17029"/>
    </ligand>
</feature>
<feature type="binding site" evidence="2">
    <location>
        <begin position="208"/>
        <end position="211"/>
    </location>
    <ligand>
        <name>chitin</name>
        <dbReference type="ChEBI" id="CHEBI:17029"/>
    </ligand>
</feature>
<feature type="binding site" evidence="2">
    <location>
        <position position="350"/>
    </location>
    <ligand>
        <name>chitin</name>
        <dbReference type="ChEBI" id="CHEBI:17029"/>
    </ligand>
</feature>
<feature type="glycosylation site" description="N-linked (GlcNAc...) asparagine" evidence="1">
    <location>
        <position position="30"/>
    </location>
</feature>
<feature type="glycosylation site" description="N-linked (GlcNAc...) asparagine" evidence="1">
    <location>
        <position position="82"/>
    </location>
</feature>
<feature type="glycosylation site" description="N-linked (GlcNAc...) asparagine" evidence="1">
    <location>
        <position position="123"/>
    </location>
</feature>
<feature type="glycosylation site" description="N-linked (GlcNAc...) asparagine" evidence="1">
    <location>
        <position position="132"/>
    </location>
</feature>
<feature type="glycosylation site" description="N-linked (GlcNAc...) asparagine" evidence="1">
    <location>
        <position position="155"/>
    </location>
</feature>
<feature type="glycosylation site" description="N-linked (GlcNAc...) asparagine" evidence="1">
    <location>
        <position position="237"/>
    </location>
</feature>
<keyword id="KW-0119">Carbohydrate metabolism</keyword>
<keyword id="KW-0146">Chitin degradation</keyword>
<keyword id="KW-0147">Chitin-binding</keyword>
<keyword id="KW-0325">Glycoprotein</keyword>
<keyword id="KW-0326">Glycosidase</keyword>
<keyword id="KW-0378">Hydrolase</keyword>
<keyword id="KW-0624">Polysaccharide degradation</keyword>
<keyword id="KW-1185">Reference proteome</keyword>
<keyword id="KW-0964">Secreted</keyword>
<keyword id="KW-0749">Sporulation</keyword>
<name>CHI4_CANAL</name>
<organism>
    <name type="scientific">Candida albicans (strain SC5314 / ATCC MYA-2876)</name>
    <name type="common">Yeast</name>
    <dbReference type="NCBI Taxonomy" id="237561"/>
    <lineage>
        <taxon>Eukaryota</taxon>
        <taxon>Fungi</taxon>
        <taxon>Dikarya</taxon>
        <taxon>Ascomycota</taxon>
        <taxon>Saccharomycotina</taxon>
        <taxon>Pichiomycetes</taxon>
        <taxon>Debaryomycetaceae</taxon>
        <taxon>Candida/Lodderomyces clade</taxon>
        <taxon>Candida</taxon>
    </lineage>
</organism>
<accession>Q5AM60</accession>
<accession>A0A1D8PGH9</accession>
<accession>Q5ALR1</accession>
<gene>
    <name type="primary">CHT4</name>
    <name type="ordered locus">CAALFM_C202010CA</name>
    <name type="ORF">CaO19.1515</name>
    <name type="ORF">CaO19.9090</name>
</gene>
<sequence length="388" mass="44360">MCHKMMNKFQQRLHHTTSTPLFKTCVYFSNWSVYQKKHFPQDIPIEYYTHIFYAFILIDEQTGKLKFSDEWCDLQMPQPSPNQSITGNLQQFYEMKKKNRHLKLIMSIGGWGTCHLFESVVSNDTKFDNFVNSTIEFAEKYGFDGVDIDWEYPKNSTQAAKLVELLARLRNKLNSKYIITVAAPGGSDNIEILKIQEMDKYLTFWNLMCYDFAGEGWSSKTAFHSNLFGNNGDNSLNASDVVQTYINKGVHPTKLILGMPMYGRIFHGVDRPEIGIPFTKERKSGCIEADVVDYNKFGDTFDYEDFDPRKVGALKYDSHSKQLITFDNLQCARIKASFIQSRQLGGGMWWDSAGDVSVTNDGCLVKNFVDQLGGVEVLEKSANNLHGC</sequence>
<dbReference type="EC" id="3.2.1.14"/>
<dbReference type="EMBL" id="CP017624">
    <property type="protein sequence ID" value="AOW27242.1"/>
    <property type="molecule type" value="Genomic_DNA"/>
</dbReference>
<dbReference type="RefSeq" id="XP_722560.1">
    <property type="nucleotide sequence ID" value="XM_717467.1"/>
</dbReference>
<dbReference type="SMR" id="Q5AM60"/>
<dbReference type="BioGRID" id="1218862">
    <property type="interactions" value="1"/>
</dbReference>
<dbReference type="FunCoup" id="Q5AM60">
    <property type="interactions" value="613"/>
</dbReference>
<dbReference type="STRING" id="237561.Q5AM60"/>
<dbReference type="GlyCosmos" id="Q5AM60">
    <property type="glycosylation" value="6 sites, No reported glycans"/>
</dbReference>
<dbReference type="EnsemblFungi" id="C2_02010C_A-T">
    <property type="protein sequence ID" value="C2_02010C_A-T-p1"/>
    <property type="gene ID" value="C2_02010C_A"/>
</dbReference>
<dbReference type="GeneID" id="3635768"/>
<dbReference type="KEGG" id="cal:CAALFM_C202010CA"/>
<dbReference type="CGD" id="CAL0000185677">
    <property type="gene designation" value="CHT4"/>
</dbReference>
<dbReference type="VEuPathDB" id="FungiDB:C2_02010C_A"/>
<dbReference type="eggNOG" id="KOG2806">
    <property type="taxonomic scope" value="Eukaryota"/>
</dbReference>
<dbReference type="HOGENOM" id="CLU_002833_1_0_1"/>
<dbReference type="InParanoid" id="Q5AM60"/>
<dbReference type="OrthoDB" id="76388at2759"/>
<dbReference type="PRO" id="PR:Q5AM60"/>
<dbReference type="Proteomes" id="UP000000559">
    <property type="component" value="Chromosome 2"/>
</dbReference>
<dbReference type="GO" id="GO:0005576">
    <property type="term" value="C:extracellular region"/>
    <property type="evidence" value="ECO:0000318"/>
    <property type="project" value="GO_Central"/>
</dbReference>
<dbReference type="GO" id="GO:0008061">
    <property type="term" value="F:chitin binding"/>
    <property type="evidence" value="ECO:0007669"/>
    <property type="project" value="UniProtKB-KW"/>
</dbReference>
<dbReference type="GO" id="GO:0004568">
    <property type="term" value="F:chitinase activity"/>
    <property type="evidence" value="ECO:0000314"/>
    <property type="project" value="CGD"/>
</dbReference>
<dbReference type="GO" id="GO:0008843">
    <property type="term" value="F:endochitinase activity"/>
    <property type="evidence" value="ECO:0007669"/>
    <property type="project" value="UniProtKB-EC"/>
</dbReference>
<dbReference type="GO" id="GO:0006032">
    <property type="term" value="P:chitin catabolic process"/>
    <property type="evidence" value="ECO:0000314"/>
    <property type="project" value="CGD"/>
</dbReference>
<dbReference type="GO" id="GO:0000272">
    <property type="term" value="P:polysaccharide catabolic process"/>
    <property type="evidence" value="ECO:0007669"/>
    <property type="project" value="UniProtKB-KW"/>
</dbReference>
<dbReference type="GO" id="GO:0030435">
    <property type="term" value="P:sporulation resulting in formation of a cellular spore"/>
    <property type="evidence" value="ECO:0007669"/>
    <property type="project" value="UniProtKB-KW"/>
</dbReference>
<dbReference type="CDD" id="cd06548">
    <property type="entry name" value="GH18_chitinase"/>
    <property type="match status" value="1"/>
</dbReference>
<dbReference type="FunFam" id="3.20.20.80:FF:000075">
    <property type="entry name" value="Sporulation-specific chitinase"/>
    <property type="match status" value="1"/>
</dbReference>
<dbReference type="Gene3D" id="3.10.50.10">
    <property type="match status" value="1"/>
</dbReference>
<dbReference type="Gene3D" id="3.20.20.80">
    <property type="entry name" value="Glycosidases"/>
    <property type="match status" value="1"/>
</dbReference>
<dbReference type="InterPro" id="IPR011583">
    <property type="entry name" value="Chitinase_II/V-like_cat"/>
</dbReference>
<dbReference type="InterPro" id="IPR029070">
    <property type="entry name" value="Chitinase_insertion_sf"/>
</dbReference>
<dbReference type="InterPro" id="IPR001223">
    <property type="entry name" value="Glyco_hydro18_cat"/>
</dbReference>
<dbReference type="InterPro" id="IPR001579">
    <property type="entry name" value="Glyco_hydro_18_chit_AS"/>
</dbReference>
<dbReference type="InterPro" id="IPR017853">
    <property type="entry name" value="Glycoside_hydrolase_SF"/>
</dbReference>
<dbReference type="InterPro" id="IPR050314">
    <property type="entry name" value="Glycosyl_Hydrlase_18"/>
</dbReference>
<dbReference type="PANTHER" id="PTHR11177">
    <property type="entry name" value="CHITINASE"/>
    <property type="match status" value="1"/>
</dbReference>
<dbReference type="PANTHER" id="PTHR11177:SF317">
    <property type="entry name" value="CHITINASE 12-RELATED"/>
    <property type="match status" value="1"/>
</dbReference>
<dbReference type="Pfam" id="PF00704">
    <property type="entry name" value="Glyco_hydro_18"/>
    <property type="match status" value="1"/>
</dbReference>
<dbReference type="SMART" id="SM00636">
    <property type="entry name" value="Glyco_18"/>
    <property type="match status" value="1"/>
</dbReference>
<dbReference type="SUPFAM" id="SSF51445">
    <property type="entry name" value="(Trans)glycosidases"/>
    <property type="match status" value="1"/>
</dbReference>
<dbReference type="PROSITE" id="PS01095">
    <property type="entry name" value="GH18_1"/>
    <property type="match status" value="1"/>
</dbReference>
<dbReference type="PROSITE" id="PS51910">
    <property type="entry name" value="GH18_2"/>
    <property type="match status" value="1"/>
</dbReference>
<evidence type="ECO:0000255" key="1"/>
<evidence type="ECO:0000255" key="2">
    <source>
        <dbReference type="PROSITE-ProRule" id="PRU01258"/>
    </source>
</evidence>
<evidence type="ECO:0000269" key="3">
    <source>
    </source>
</evidence>
<evidence type="ECO:0000305" key="4"/>
<reference key="1">
    <citation type="journal article" date="2004" name="Proc. Natl. Acad. Sci. U.S.A.">
        <title>The diploid genome sequence of Candida albicans.</title>
        <authorList>
            <person name="Jones T."/>
            <person name="Federspiel N.A."/>
            <person name="Chibana H."/>
            <person name="Dungan J."/>
            <person name="Kalman S."/>
            <person name="Magee B.B."/>
            <person name="Newport G."/>
            <person name="Thorstenson Y.R."/>
            <person name="Agabian N."/>
            <person name="Magee P.T."/>
            <person name="Davis R.W."/>
            <person name="Scherer S."/>
        </authorList>
    </citation>
    <scope>NUCLEOTIDE SEQUENCE [LARGE SCALE GENOMIC DNA]</scope>
    <source>
        <strain>SC5314 / ATCC MYA-2876</strain>
    </source>
</reference>
<reference key="2">
    <citation type="journal article" date="2007" name="Genome Biol.">
        <title>Assembly of the Candida albicans genome into sixteen supercontigs aligned on the eight chromosomes.</title>
        <authorList>
            <person name="van het Hoog M."/>
            <person name="Rast T.J."/>
            <person name="Martchenko M."/>
            <person name="Grindle S."/>
            <person name="Dignard D."/>
            <person name="Hogues H."/>
            <person name="Cuomo C."/>
            <person name="Berriman M."/>
            <person name="Scherer S."/>
            <person name="Magee B.B."/>
            <person name="Whiteway M."/>
            <person name="Chibana H."/>
            <person name="Nantel A."/>
            <person name="Magee P.T."/>
        </authorList>
    </citation>
    <scope>GENOME REANNOTATION</scope>
    <source>
        <strain>SC5314 / ATCC MYA-2876</strain>
    </source>
</reference>
<reference key="3">
    <citation type="journal article" date="2013" name="Genome Biol.">
        <title>Assembly of a phased diploid Candida albicans genome facilitates allele-specific measurements and provides a simple model for repeat and indel structure.</title>
        <authorList>
            <person name="Muzzey D."/>
            <person name="Schwartz K."/>
            <person name="Weissman J.S."/>
            <person name="Sherlock G."/>
        </authorList>
    </citation>
    <scope>NUCLEOTIDE SEQUENCE [LARGE SCALE GENOMIC DNA]</scope>
    <scope>GENOME REANNOTATION</scope>
    <source>
        <strain>SC5314 / ATCC MYA-2876</strain>
    </source>
</reference>
<reference key="4">
    <citation type="journal article" date="2008" name="Microbiol. Res.">
        <title>An Ashbya gossypii cts2 mutant deficient in a sporulation-specific chitinase can be complemented by Candida albicans CHT4.</title>
        <authorList>
            <person name="Dunkler A."/>
            <person name="Jorde S."/>
            <person name="Wendland J."/>
        </authorList>
    </citation>
    <scope>FUNCTION</scope>
</reference>
<comment type="function">
    <text evidence="3">Chitinase involved in the remodeling of chitin in the fungal cell wall. Plays a role in sporulation.</text>
</comment>
<comment type="catalytic activity">
    <reaction>
        <text>Random endo-hydrolysis of N-acetyl-beta-D-glucosaminide (1-&gt;4)-beta-linkages in chitin and chitodextrins.</text>
        <dbReference type="EC" id="3.2.1.14"/>
    </reaction>
</comment>
<comment type="subcellular location">
    <subcellularLocation>
        <location evidence="4">Secreted</location>
    </subcellularLocation>
</comment>
<comment type="similarity">
    <text evidence="4">Belongs to the glycosyl hydrolase 18 family. Chitinase class V subfamily.</text>
</comment>
<proteinExistence type="inferred from homology"/>
<protein>
    <recommendedName>
        <fullName>Chitinase 4</fullName>
        <ecNumber>3.2.1.14</ecNumber>
    </recommendedName>
</protein>